<protein>
    <recommendedName>
        <fullName evidence="1">UvrABC system protein C</fullName>
        <shortName evidence="1">Protein UvrC</shortName>
    </recommendedName>
    <alternativeName>
        <fullName evidence="1">Excinuclease ABC subunit C</fullName>
    </alternativeName>
</protein>
<organism>
    <name type="scientific">Lactococcus lactis subsp. cremoris (strain MG1363)</name>
    <dbReference type="NCBI Taxonomy" id="416870"/>
    <lineage>
        <taxon>Bacteria</taxon>
        <taxon>Bacillati</taxon>
        <taxon>Bacillota</taxon>
        <taxon>Bacilli</taxon>
        <taxon>Lactobacillales</taxon>
        <taxon>Streptococcaceae</taxon>
        <taxon>Lactococcus</taxon>
        <taxon>Lactococcus cremoris subsp. cremoris</taxon>
    </lineage>
</organism>
<feature type="chain" id="PRO_1000077800" description="UvrABC system protein C">
    <location>
        <begin position="1"/>
        <end position="669"/>
    </location>
</feature>
<feature type="domain" description="GIY-YIG" evidence="1">
    <location>
        <begin position="14"/>
        <end position="91"/>
    </location>
</feature>
<feature type="domain" description="UVR" evidence="1">
    <location>
        <begin position="196"/>
        <end position="231"/>
    </location>
</feature>
<feature type="region of interest" description="Disordered" evidence="2">
    <location>
        <begin position="647"/>
        <end position="669"/>
    </location>
</feature>
<feature type="compositionally biased region" description="Basic and acidic residues" evidence="2">
    <location>
        <begin position="648"/>
        <end position="658"/>
    </location>
</feature>
<keyword id="KW-0963">Cytoplasm</keyword>
<keyword id="KW-0227">DNA damage</keyword>
<keyword id="KW-0228">DNA excision</keyword>
<keyword id="KW-0234">DNA repair</keyword>
<keyword id="KW-0267">Excision nuclease</keyword>
<keyword id="KW-0742">SOS response</keyword>
<proteinExistence type="inferred from homology"/>
<sequence length="669" mass="76433">MNQTIKAKLELLPDSPGCYLHKDKNGTVIYVGKAKNLKNRVRSYFHGSHNTKTELLVSEIEDLEWIVVGSNIESLVLEINLIQRYKPKYNIMLKDDKYYPFLKITNEKYPRLLVVRKVQKDGATYFGPYPDVKAANEVKRLLDRIFPFRKCGLHEKKVCFYFHIHQCLCPVVNHVDPQVYKDMTQEVKEFLTGSDKKIVKELEGKMISASDNMEFEQAAEYRDVIKAIGTLRTKQRVMNQDLKDRDVFGYYVDKGWMCVQVFFVRQGKLIQRDVNMFPYYNDAEEDFLTYIGQFYQDNNHMMPREIFIPQDIDKDSVEAVVAASQEGNLLTKAQAKAVDAKVFTAKTLKFSDQKDVEQSIVKLDKELSSEKRLSSLLAKTQIIQPSRGEKKQLVNMATKNAQTQLQLKFDVAERDILKTTKAVENLGKILGIPKPVRIESFDNSNIMGTSPVSAMVVFIDGKPSKKDYRKYKIKTVVGADDYASMREVMTRRYSRALKEETALPDLIAMDGGAGQVNIAKEVLRELGLAIPVAGMQKNDKHQTSELLFGDPLEVVPLSRQSQEFFLLTRIQDEVHRFAITFHRQLRGKNTFSSKLDGIVGLGPKRKQKLLTTFKNLKAIEEATVQEVAEAGVPYEVAERVKNTLSAPHKSDENWESIKDNVPLLKSEKS</sequence>
<evidence type="ECO:0000255" key="1">
    <source>
        <dbReference type="HAMAP-Rule" id="MF_00203"/>
    </source>
</evidence>
<evidence type="ECO:0000256" key="2">
    <source>
        <dbReference type="SAM" id="MobiDB-lite"/>
    </source>
</evidence>
<comment type="function">
    <text evidence="1">The UvrABC repair system catalyzes the recognition and processing of DNA lesions. UvrC both incises the 5' and 3' sides of the lesion. The N-terminal half is responsible for the 3' incision and the C-terminal half is responsible for the 5' incision.</text>
</comment>
<comment type="subunit">
    <text evidence="1">Interacts with UvrB in an incision complex.</text>
</comment>
<comment type="subcellular location">
    <subcellularLocation>
        <location evidence="1">Cytoplasm</location>
    </subcellularLocation>
</comment>
<comment type="similarity">
    <text evidence="1">Belongs to the UvrC family.</text>
</comment>
<name>UVRC_LACLM</name>
<reference key="1">
    <citation type="journal article" date="2007" name="J. Bacteriol.">
        <title>The complete genome sequence of the lactic acid bacterial paradigm Lactococcus lactis subsp. cremoris MG1363.</title>
        <authorList>
            <person name="Wegmann U."/>
            <person name="O'Connell-Motherway M."/>
            <person name="Zomer A."/>
            <person name="Buist G."/>
            <person name="Shearman C."/>
            <person name="Canchaya C."/>
            <person name="Ventura M."/>
            <person name="Goesmann A."/>
            <person name="Gasson M.J."/>
            <person name="Kuipers O.P."/>
            <person name="van Sinderen D."/>
            <person name="Kok J."/>
        </authorList>
    </citation>
    <scope>NUCLEOTIDE SEQUENCE [LARGE SCALE GENOMIC DNA]</scope>
    <source>
        <strain>MG1363</strain>
    </source>
</reference>
<accession>A2RLW6</accession>
<dbReference type="EMBL" id="AM406671">
    <property type="protein sequence ID" value="CAL98290.1"/>
    <property type="molecule type" value="Genomic_DNA"/>
</dbReference>
<dbReference type="RefSeq" id="WP_011835513.1">
    <property type="nucleotide sequence ID" value="NC_009004.1"/>
</dbReference>
<dbReference type="SMR" id="A2RLW6"/>
<dbReference type="STRING" id="416870.llmg_1718"/>
<dbReference type="KEGG" id="llm:llmg_1718"/>
<dbReference type="eggNOG" id="COG0322">
    <property type="taxonomic scope" value="Bacteria"/>
</dbReference>
<dbReference type="HOGENOM" id="CLU_014841_3_2_9"/>
<dbReference type="OrthoDB" id="9804933at2"/>
<dbReference type="PhylomeDB" id="A2RLW6"/>
<dbReference type="Proteomes" id="UP000000364">
    <property type="component" value="Chromosome"/>
</dbReference>
<dbReference type="GO" id="GO:0005737">
    <property type="term" value="C:cytoplasm"/>
    <property type="evidence" value="ECO:0007669"/>
    <property type="project" value="UniProtKB-SubCell"/>
</dbReference>
<dbReference type="GO" id="GO:0009380">
    <property type="term" value="C:excinuclease repair complex"/>
    <property type="evidence" value="ECO:0007669"/>
    <property type="project" value="InterPro"/>
</dbReference>
<dbReference type="GO" id="GO:0003677">
    <property type="term" value="F:DNA binding"/>
    <property type="evidence" value="ECO:0007669"/>
    <property type="project" value="UniProtKB-UniRule"/>
</dbReference>
<dbReference type="GO" id="GO:0009381">
    <property type="term" value="F:excinuclease ABC activity"/>
    <property type="evidence" value="ECO:0007669"/>
    <property type="project" value="UniProtKB-UniRule"/>
</dbReference>
<dbReference type="GO" id="GO:0006289">
    <property type="term" value="P:nucleotide-excision repair"/>
    <property type="evidence" value="ECO:0007669"/>
    <property type="project" value="UniProtKB-UniRule"/>
</dbReference>
<dbReference type="GO" id="GO:0009432">
    <property type="term" value="P:SOS response"/>
    <property type="evidence" value="ECO:0007669"/>
    <property type="project" value="UniProtKB-UniRule"/>
</dbReference>
<dbReference type="CDD" id="cd10434">
    <property type="entry name" value="GIY-YIG_UvrC_Cho"/>
    <property type="match status" value="1"/>
</dbReference>
<dbReference type="FunFam" id="3.30.420.340:FF:000002">
    <property type="entry name" value="UvrABC system protein C"/>
    <property type="match status" value="1"/>
</dbReference>
<dbReference type="FunFam" id="3.40.1440.10:FF:000001">
    <property type="entry name" value="UvrABC system protein C"/>
    <property type="match status" value="1"/>
</dbReference>
<dbReference type="FunFam" id="4.10.860.10:FF:000007">
    <property type="entry name" value="UvrABC system protein C"/>
    <property type="match status" value="1"/>
</dbReference>
<dbReference type="Gene3D" id="1.10.150.20">
    <property type="entry name" value="5' to 3' exonuclease, C-terminal subdomain"/>
    <property type="match status" value="1"/>
</dbReference>
<dbReference type="Gene3D" id="3.40.1440.10">
    <property type="entry name" value="GIY-YIG endonuclease"/>
    <property type="match status" value="1"/>
</dbReference>
<dbReference type="Gene3D" id="4.10.860.10">
    <property type="entry name" value="UVR domain"/>
    <property type="match status" value="1"/>
</dbReference>
<dbReference type="Gene3D" id="3.30.420.340">
    <property type="entry name" value="UvrC, RNAse H endonuclease domain"/>
    <property type="match status" value="1"/>
</dbReference>
<dbReference type="HAMAP" id="MF_00203">
    <property type="entry name" value="UvrC"/>
    <property type="match status" value="1"/>
</dbReference>
<dbReference type="InterPro" id="IPR000305">
    <property type="entry name" value="GIY-YIG_endonuc"/>
</dbReference>
<dbReference type="InterPro" id="IPR035901">
    <property type="entry name" value="GIY-YIG_endonuc_sf"/>
</dbReference>
<dbReference type="InterPro" id="IPR047296">
    <property type="entry name" value="GIY-YIG_UvrC_Cho"/>
</dbReference>
<dbReference type="InterPro" id="IPR010994">
    <property type="entry name" value="RuvA_2-like"/>
</dbReference>
<dbReference type="InterPro" id="IPR001943">
    <property type="entry name" value="UVR_dom"/>
</dbReference>
<dbReference type="InterPro" id="IPR036876">
    <property type="entry name" value="UVR_dom_sf"/>
</dbReference>
<dbReference type="InterPro" id="IPR050066">
    <property type="entry name" value="UvrABC_protein_C"/>
</dbReference>
<dbReference type="InterPro" id="IPR004791">
    <property type="entry name" value="UvrC"/>
</dbReference>
<dbReference type="InterPro" id="IPR001162">
    <property type="entry name" value="UvrC_RNase_H_dom"/>
</dbReference>
<dbReference type="InterPro" id="IPR038476">
    <property type="entry name" value="UvrC_RNase_H_dom_sf"/>
</dbReference>
<dbReference type="NCBIfam" id="TIGR00194">
    <property type="entry name" value="uvrC"/>
    <property type="match status" value="1"/>
</dbReference>
<dbReference type="PANTHER" id="PTHR30562:SF1">
    <property type="entry name" value="UVRABC SYSTEM PROTEIN C"/>
    <property type="match status" value="1"/>
</dbReference>
<dbReference type="PANTHER" id="PTHR30562">
    <property type="entry name" value="UVRC/OXIDOREDUCTASE"/>
    <property type="match status" value="1"/>
</dbReference>
<dbReference type="Pfam" id="PF01541">
    <property type="entry name" value="GIY-YIG"/>
    <property type="match status" value="1"/>
</dbReference>
<dbReference type="Pfam" id="PF02151">
    <property type="entry name" value="UVR"/>
    <property type="match status" value="1"/>
</dbReference>
<dbReference type="Pfam" id="PF22920">
    <property type="entry name" value="UvrC_RNaseH"/>
    <property type="match status" value="2"/>
</dbReference>
<dbReference type="Pfam" id="PF08459">
    <property type="entry name" value="UvrC_RNaseH_dom"/>
    <property type="match status" value="1"/>
</dbReference>
<dbReference type="SMART" id="SM00465">
    <property type="entry name" value="GIYc"/>
    <property type="match status" value="1"/>
</dbReference>
<dbReference type="SUPFAM" id="SSF46600">
    <property type="entry name" value="C-terminal UvrC-binding domain of UvrB"/>
    <property type="match status" value="1"/>
</dbReference>
<dbReference type="SUPFAM" id="SSF82771">
    <property type="entry name" value="GIY-YIG endonuclease"/>
    <property type="match status" value="1"/>
</dbReference>
<dbReference type="SUPFAM" id="SSF47781">
    <property type="entry name" value="RuvA domain 2-like"/>
    <property type="match status" value="1"/>
</dbReference>
<dbReference type="PROSITE" id="PS50164">
    <property type="entry name" value="GIY_YIG"/>
    <property type="match status" value="1"/>
</dbReference>
<dbReference type="PROSITE" id="PS50151">
    <property type="entry name" value="UVR"/>
    <property type="match status" value="1"/>
</dbReference>
<dbReference type="PROSITE" id="PS50165">
    <property type="entry name" value="UVRC"/>
    <property type="match status" value="1"/>
</dbReference>
<gene>
    <name evidence="1" type="primary">uvrC</name>
    <name type="ordered locus">llmg_1718</name>
</gene>